<protein>
    <recommendedName>
        <fullName evidence="1">Chaperone protein DnaK</fullName>
    </recommendedName>
    <alternativeName>
        <fullName evidence="1">HSP70</fullName>
    </alternativeName>
    <alternativeName>
        <fullName evidence="1">Heat shock 70 kDa protein</fullName>
    </alternativeName>
    <alternativeName>
        <fullName evidence="1">Heat shock protein 70</fullName>
    </alternativeName>
</protein>
<comment type="function">
    <text evidence="1">Acts as a chaperone.</text>
</comment>
<comment type="induction">
    <text evidence="1">By stress conditions e.g. heat shock.</text>
</comment>
<comment type="similarity">
    <text evidence="1">Belongs to the heat shock protein 70 family.</text>
</comment>
<dbReference type="EMBL" id="CP000611">
    <property type="protein sequence ID" value="ABQ72077.1"/>
    <property type="molecule type" value="Genomic_DNA"/>
</dbReference>
<dbReference type="RefSeq" id="WP_003401814.1">
    <property type="nucleotide sequence ID" value="NZ_CP016972.1"/>
</dbReference>
<dbReference type="SMR" id="A5TZ77"/>
<dbReference type="GeneID" id="45424316"/>
<dbReference type="KEGG" id="mra:MRA_0359"/>
<dbReference type="eggNOG" id="COG0443">
    <property type="taxonomic scope" value="Bacteria"/>
</dbReference>
<dbReference type="HOGENOM" id="CLU_005965_2_3_11"/>
<dbReference type="Proteomes" id="UP000001988">
    <property type="component" value="Chromosome"/>
</dbReference>
<dbReference type="GO" id="GO:0005524">
    <property type="term" value="F:ATP binding"/>
    <property type="evidence" value="ECO:0007669"/>
    <property type="project" value="UniProtKB-UniRule"/>
</dbReference>
<dbReference type="GO" id="GO:0140662">
    <property type="term" value="F:ATP-dependent protein folding chaperone"/>
    <property type="evidence" value="ECO:0007669"/>
    <property type="project" value="InterPro"/>
</dbReference>
<dbReference type="GO" id="GO:0051082">
    <property type="term" value="F:unfolded protein binding"/>
    <property type="evidence" value="ECO:0007669"/>
    <property type="project" value="InterPro"/>
</dbReference>
<dbReference type="CDD" id="cd10234">
    <property type="entry name" value="ASKHA_NBD_HSP70_DnaK-like"/>
    <property type="match status" value="1"/>
</dbReference>
<dbReference type="FunFam" id="2.60.34.10:FF:000014">
    <property type="entry name" value="Chaperone protein DnaK HSP70"/>
    <property type="match status" value="1"/>
</dbReference>
<dbReference type="FunFam" id="1.20.1270.10:FF:000001">
    <property type="entry name" value="Molecular chaperone DnaK"/>
    <property type="match status" value="1"/>
</dbReference>
<dbReference type="FunFam" id="3.30.420.40:FF:000071">
    <property type="entry name" value="Molecular chaperone DnaK"/>
    <property type="match status" value="1"/>
</dbReference>
<dbReference type="FunFam" id="3.90.640.10:FF:000003">
    <property type="entry name" value="Molecular chaperone DnaK"/>
    <property type="match status" value="1"/>
</dbReference>
<dbReference type="Gene3D" id="1.20.1270.10">
    <property type="match status" value="1"/>
</dbReference>
<dbReference type="Gene3D" id="3.30.420.40">
    <property type="match status" value="2"/>
</dbReference>
<dbReference type="Gene3D" id="3.90.640.10">
    <property type="entry name" value="Actin, Chain A, domain 4"/>
    <property type="match status" value="1"/>
</dbReference>
<dbReference type="Gene3D" id="2.60.34.10">
    <property type="entry name" value="Substrate Binding Domain Of DNAk, Chain A, domain 1"/>
    <property type="match status" value="1"/>
</dbReference>
<dbReference type="HAMAP" id="MF_00332">
    <property type="entry name" value="DnaK"/>
    <property type="match status" value="1"/>
</dbReference>
<dbReference type="InterPro" id="IPR043129">
    <property type="entry name" value="ATPase_NBD"/>
</dbReference>
<dbReference type="InterPro" id="IPR012725">
    <property type="entry name" value="Chaperone_DnaK"/>
</dbReference>
<dbReference type="InterPro" id="IPR018181">
    <property type="entry name" value="Heat_shock_70_CS"/>
</dbReference>
<dbReference type="InterPro" id="IPR029048">
    <property type="entry name" value="HSP70_C_sf"/>
</dbReference>
<dbReference type="InterPro" id="IPR029047">
    <property type="entry name" value="HSP70_peptide-bd_sf"/>
</dbReference>
<dbReference type="InterPro" id="IPR013126">
    <property type="entry name" value="Hsp_70_fam"/>
</dbReference>
<dbReference type="NCBIfam" id="NF001413">
    <property type="entry name" value="PRK00290.1"/>
    <property type="match status" value="1"/>
</dbReference>
<dbReference type="NCBIfam" id="TIGR02350">
    <property type="entry name" value="prok_dnaK"/>
    <property type="match status" value="1"/>
</dbReference>
<dbReference type="PANTHER" id="PTHR19375">
    <property type="entry name" value="HEAT SHOCK PROTEIN 70KDA"/>
    <property type="match status" value="1"/>
</dbReference>
<dbReference type="Pfam" id="PF00012">
    <property type="entry name" value="HSP70"/>
    <property type="match status" value="1"/>
</dbReference>
<dbReference type="PRINTS" id="PR00301">
    <property type="entry name" value="HEATSHOCK70"/>
</dbReference>
<dbReference type="SUPFAM" id="SSF53067">
    <property type="entry name" value="Actin-like ATPase domain"/>
    <property type="match status" value="2"/>
</dbReference>
<dbReference type="SUPFAM" id="SSF100934">
    <property type="entry name" value="Heat shock protein 70kD (HSP70), C-terminal subdomain"/>
    <property type="match status" value="1"/>
</dbReference>
<dbReference type="SUPFAM" id="SSF100920">
    <property type="entry name" value="Heat shock protein 70kD (HSP70), peptide-binding domain"/>
    <property type="match status" value="1"/>
</dbReference>
<dbReference type="PROSITE" id="PS00297">
    <property type="entry name" value="HSP70_1"/>
    <property type="match status" value="1"/>
</dbReference>
<dbReference type="PROSITE" id="PS00329">
    <property type="entry name" value="HSP70_2"/>
    <property type="match status" value="1"/>
</dbReference>
<dbReference type="PROSITE" id="PS01036">
    <property type="entry name" value="HSP70_3"/>
    <property type="match status" value="1"/>
</dbReference>
<organism>
    <name type="scientific">Mycobacterium tuberculosis (strain ATCC 25177 / H37Ra)</name>
    <dbReference type="NCBI Taxonomy" id="419947"/>
    <lineage>
        <taxon>Bacteria</taxon>
        <taxon>Bacillati</taxon>
        <taxon>Actinomycetota</taxon>
        <taxon>Actinomycetes</taxon>
        <taxon>Mycobacteriales</taxon>
        <taxon>Mycobacteriaceae</taxon>
        <taxon>Mycobacterium</taxon>
        <taxon>Mycobacterium tuberculosis complex</taxon>
    </lineage>
</organism>
<evidence type="ECO:0000255" key="1">
    <source>
        <dbReference type="HAMAP-Rule" id="MF_00332"/>
    </source>
</evidence>
<evidence type="ECO:0000256" key="2">
    <source>
        <dbReference type="SAM" id="MobiDB-lite"/>
    </source>
</evidence>
<accession>A5TZ77</accession>
<feature type="chain" id="PRO_1000059611" description="Chaperone protein DnaK">
    <location>
        <begin position="1"/>
        <end position="625"/>
    </location>
</feature>
<feature type="region of interest" description="Disordered" evidence="2">
    <location>
        <begin position="586"/>
        <end position="625"/>
    </location>
</feature>
<feature type="compositionally biased region" description="Low complexity" evidence="2">
    <location>
        <begin position="586"/>
        <end position="598"/>
    </location>
</feature>
<feature type="modified residue" description="Phosphothreonine; by autocatalysis" evidence="1">
    <location>
        <position position="175"/>
    </location>
</feature>
<proteinExistence type="inferred from homology"/>
<name>DNAK_MYCTA</name>
<gene>
    <name evidence="1" type="primary">dnaK</name>
    <name type="ordered locus">MRA_0359</name>
</gene>
<keyword id="KW-0067">ATP-binding</keyword>
<keyword id="KW-0143">Chaperone</keyword>
<keyword id="KW-0547">Nucleotide-binding</keyword>
<keyword id="KW-0597">Phosphoprotein</keyword>
<keyword id="KW-1185">Reference proteome</keyword>
<keyword id="KW-0346">Stress response</keyword>
<reference key="1">
    <citation type="journal article" date="2008" name="PLoS ONE">
        <title>Genetic basis of virulence attenuation revealed by comparative genomic analysis of Mycobacterium tuberculosis strain H37Ra versus H37Rv.</title>
        <authorList>
            <person name="Zheng H."/>
            <person name="Lu L."/>
            <person name="Wang B."/>
            <person name="Pu S."/>
            <person name="Zhang X."/>
            <person name="Zhu G."/>
            <person name="Shi W."/>
            <person name="Zhang L."/>
            <person name="Wang H."/>
            <person name="Wang S."/>
            <person name="Zhao G."/>
            <person name="Zhang Y."/>
        </authorList>
    </citation>
    <scope>NUCLEOTIDE SEQUENCE [LARGE SCALE GENOMIC DNA]</scope>
    <source>
        <strain>ATCC 25177 / H37Ra</strain>
    </source>
</reference>
<sequence length="625" mass="66831">MARAVGIDLGTTNSVVSVLEGGDPVVVANSEGSRTTPSIVAFARNGEVLVGQPAKNQAVTNVDRTVRSVKRHMGSDWSIEIDGKKYTAPEISARILMKLKRDAEAYLGEDITDAVITTPAYFNDAQRQATKDAGQIAGLNVLRIVNEPTAAALAYGLDKGEKEQRILVFDLGGGTFDVSLLEIGEGVVEVRATSGDNHLGGDDWDQRVVDWLVDKFKGTSGIDLTKDKMAMQRLREAAEKAKIELSSSQSTSINLPYITVDADKNPLFLDEQLTRAEFQRITQDLLDRTRKPFQSVIADTGISVSEIDHVVLVGGSTRMPAVTDLVKELTGGKEPNKGVNPDEVVAVGAALQAGVLKGEVKDVLLLDVTPLSLGIETKGGVMTRLIERNTTIPTKRSETFTTADDNQPSVQIQVYQGEREIAAHNKLLGSFELTGIPPAPRGIPQIEVTFDIDANGIVHVTAKDKGTGKENTIRIQEGSGLSKEDIDRMIKDAEAHAEEDRKRREEADVRNQAETLVYQTEKFVKEQREAEGGSKVPEDTLNKVDAAVAEAKAALGGSDISAIKSAMEKLGQESQALGQAIYEAAQAASQATGAAHPGGEPGGAHPGSADDVVDAEVVDDGREAK</sequence>